<sequence>MSIVVKNNIHWVGQRDWEVRDFHGTEYKTLRGSSYNSYLIREEKNVLIDTVDHKFSREFVQNLRNEIDLADIDYIVINHAEEDHAGALTELMAQIPDTPIYCTANAIDSINGHHHHPEWNFNVVKTGDTLDIGNGKQLIFVETPMLHWPDSMMTYLTGDAVLFSNDAFGQHYCDEHLFNDEVDQTELFEQCQRYYANILTPFSRLVTPKITEILGFNLPVDMIATSHGVVWRDNPTQIVELYLKWAADYQEDRITIFYDTMSNNTRMMADAIAQGIAETDPRVAVKIFNVARSDKNEILTNVFRSKGVLVGTSTMNNVMMPKIAGLVEEMTGLRFRNKRASAFGSHGWSGGAVDRLSTRLQDAGFEMSLSLKAKWRPDQDALELCREHGREIARQWALAPLPQSTVNTVVKEETSATTKSDLGPRMQCSVCQWIYDPAKGEPMQDVAPGTPWSEVPDNFLCPECSLGKDVFDELASEAK</sequence>
<dbReference type="EMBL" id="CP000038">
    <property type="protein sequence ID" value="AAZ89458.1"/>
    <property type="molecule type" value="Genomic_DNA"/>
</dbReference>
<dbReference type="RefSeq" id="WP_000029618.1">
    <property type="nucleotide sequence ID" value="NC_007384.1"/>
</dbReference>
<dbReference type="SMR" id="Q3YYF4"/>
<dbReference type="GeneID" id="93779301"/>
<dbReference type="KEGG" id="ssn:SSON_2854"/>
<dbReference type="HOGENOM" id="CLU_017490_0_1_6"/>
<dbReference type="UniPathway" id="UPA00638"/>
<dbReference type="Proteomes" id="UP000002529">
    <property type="component" value="Chromosome"/>
</dbReference>
<dbReference type="GO" id="GO:0005737">
    <property type="term" value="C:cytoplasm"/>
    <property type="evidence" value="ECO:0007669"/>
    <property type="project" value="UniProtKB-SubCell"/>
</dbReference>
<dbReference type="GO" id="GO:0009055">
    <property type="term" value="F:electron transfer activity"/>
    <property type="evidence" value="ECO:0007669"/>
    <property type="project" value="UniProtKB-UniRule"/>
</dbReference>
<dbReference type="GO" id="GO:0010181">
    <property type="term" value="F:FMN binding"/>
    <property type="evidence" value="ECO:0007669"/>
    <property type="project" value="InterPro"/>
</dbReference>
<dbReference type="GO" id="GO:0005506">
    <property type="term" value="F:iron ion binding"/>
    <property type="evidence" value="ECO:0007669"/>
    <property type="project" value="InterPro"/>
</dbReference>
<dbReference type="GO" id="GO:0016966">
    <property type="term" value="F:nitric oxide reductase activity"/>
    <property type="evidence" value="ECO:0007669"/>
    <property type="project" value="InterPro"/>
</dbReference>
<dbReference type="CDD" id="cd07709">
    <property type="entry name" value="flavodiiron_proteins_MBL-fold"/>
    <property type="match status" value="1"/>
</dbReference>
<dbReference type="CDD" id="cd00730">
    <property type="entry name" value="rubredoxin"/>
    <property type="match status" value="1"/>
</dbReference>
<dbReference type="FunFam" id="2.20.28.10:FF:000010">
    <property type="entry name" value="Anaerobic nitric oxide reductase flavorubredoxin"/>
    <property type="match status" value="1"/>
</dbReference>
<dbReference type="FunFam" id="3.40.50.360:FF:000012">
    <property type="entry name" value="Anaerobic nitric oxide reductase flavorubredoxin"/>
    <property type="match status" value="1"/>
</dbReference>
<dbReference type="FunFam" id="3.60.15.10:FF:000009">
    <property type="entry name" value="Anaerobic nitric oxide reductase flavorubredoxin"/>
    <property type="match status" value="1"/>
</dbReference>
<dbReference type="Gene3D" id="2.20.28.10">
    <property type="match status" value="1"/>
</dbReference>
<dbReference type="Gene3D" id="3.40.50.360">
    <property type="match status" value="1"/>
</dbReference>
<dbReference type="Gene3D" id="3.60.15.10">
    <property type="entry name" value="Ribonuclease Z/Hydroxyacylglutathione hydrolase-like"/>
    <property type="match status" value="1"/>
</dbReference>
<dbReference type="HAMAP" id="MF_01312">
    <property type="entry name" value="NorV"/>
    <property type="match status" value="1"/>
</dbReference>
<dbReference type="InterPro" id="IPR023957">
    <property type="entry name" value="Anaer_NO_rdtase_flvorubredoxin"/>
</dbReference>
<dbReference type="InterPro" id="IPR008254">
    <property type="entry name" value="Flavodoxin/NO_synth"/>
</dbReference>
<dbReference type="InterPro" id="IPR029039">
    <property type="entry name" value="Flavoprotein-like_sf"/>
</dbReference>
<dbReference type="InterPro" id="IPR001279">
    <property type="entry name" value="Metallo-B-lactamas"/>
</dbReference>
<dbReference type="InterPro" id="IPR045761">
    <property type="entry name" value="ODP_dom"/>
</dbReference>
<dbReference type="InterPro" id="IPR036866">
    <property type="entry name" value="RibonucZ/Hydroxyglut_hydro"/>
</dbReference>
<dbReference type="InterPro" id="IPR024934">
    <property type="entry name" value="Rubredoxin-like_dom"/>
</dbReference>
<dbReference type="InterPro" id="IPR016440">
    <property type="entry name" value="Rubredoxin-O_OxRdtase"/>
</dbReference>
<dbReference type="InterPro" id="IPR024935">
    <property type="entry name" value="Rubredoxin_dom"/>
</dbReference>
<dbReference type="NCBIfam" id="NF003954">
    <property type="entry name" value="PRK05452.1"/>
    <property type="match status" value="1"/>
</dbReference>
<dbReference type="PANTHER" id="PTHR43717">
    <property type="entry name" value="ANAEROBIC NITRIC OXIDE REDUCTASE FLAVORUBREDOXIN"/>
    <property type="match status" value="1"/>
</dbReference>
<dbReference type="PANTHER" id="PTHR43717:SF1">
    <property type="entry name" value="ANAEROBIC NITRIC OXIDE REDUCTASE FLAVORUBREDOXIN"/>
    <property type="match status" value="1"/>
</dbReference>
<dbReference type="Pfam" id="PF00258">
    <property type="entry name" value="Flavodoxin_1"/>
    <property type="match status" value="1"/>
</dbReference>
<dbReference type="Pfam" id="PF19583">
    <property type="entry name" value="ODP"/>
    <property type="match status" value="1"/>
</dbReference>
<dbReference type="Pfam" id="PF00301">
    <property type="entry name" value="Rubredoxin"/>
    <property type="match status" value="1"/>
</dbReference>
<dbReference type="PIRSF" id="PIRSF005243">
    <property type="entry name" value="ROO"/>
    <property type="match status" value="1"/>
</dbReference>
<dbReference type="PRINTS" id="PR00163">
    <property type="entry name" value="RUBREDOXIN"/>
</dbReference>
<dbReference type="SMART" id="SM00849">
    <property type="entry name" value="Lactamase_B"/>
    <property type="match status" value="1"/>
</dbReference>
<dbReference type="SUPFAM" id="SSF52218">
    <property type="entry name" value="Flavoproteins"/>
    <property type="match status" value="1"/>
</dbReference>
<dbReference type="SUPFAM" id="SSF56281">
    <property type="entry name" value="Metallo-hydrolase/oxidoreductase"/>
    <property type="match status" value="1"/>
</dbReference>
<dbReference type="SUPFAM" id="SSF57802">
    <property type="entry name" value="Rubredoxin-like"/>
    <property type="match status" value="1"/>
</dbReference>
<dbReference type="PROSITE" id="PS50902">
    <property type="entry name" value="FLAVODOXIN_LIKE"/>
    <property type="match status" value="1"/>
</dbReference>
<dbReference type="PROSITE" id="PS50903">
    <property type="entry name" value="RUBREDOXIN_LIKE"/>
    <property type="match status" value="1"/>
</dbReference>
<feature type="chain" id="PRO_0000305600" description="Anaerobic nitric oxide reductase flavorubredoxin">
    <location>
        <begin position="1"/>
        <end position="479"/>
    </location>
</feature>
<feature type="domain" description="Flavodoxin-like" evidence="1">
    <location>
        <begin position="254"/>
        <end position="393"/>
    </location>
</feature>
<feature type="domain" description="Rubredoxin-like" evidence="1">
    <location>
        <begin position="423"/>
        <end position="474"/>
    </location>
</feature>
<feature type="region of interest" description="Zinc metallo-hydrolase">
    <location>
        <begin position="30"/>
        <end position="210"/>
    </location>
</feature>
<feature type="binding site" evidence="1">
    <location>
        <position position="79"/>
    </location>
    <ligand>
        <name>Fe cation</name>
        <dbReference type="ChEBI" id="CHEBI:24875"/>
        <label>1</label>
    </ligand>
</feature>
<feature type="binding site" evidence="1">
    <location>
        <position position="81"/>
    </location>
    <ligand>
        <name>Fe cation</name>
        <dbReference type="ChEBI" id="CHEBI:24875"/>
        <label>1</label>
    </ligand>
</feature>
<feature type="binding site" evidence="1">
    <location>
        <position position="83"/>
    </location>
    <ligand>
        <name>Fe cation</name>
        <dbReference type="ChEBI" id="CHEBI:24875"/>
        <label>2</label>
    </ligand>
</feature>
<feature type="binding site" evidence="1">
    <location>
        <position position="147"/>
    </location>
    <ligand>
        <name>Fe cation</name>
        <dbReference type="ChEBI" id="CHEBI:24875"/>
        <label>1</label>
    </ligand>
</feature>
<feature type="binding site" evidence="1">
    <location>
        <position position="166"/>
    </location>
    <ligand>
        <name>Fe cation</name>
        <dbReference type="ChEBI" id="CHEBI:24875"/>
        <label>1</label>
    </ligand>
</feature>
<feature type="binding site" evidence="1">
    <location>
        <position position="166"/>
    </location>
    <ligand>
        <name>Fe cation</name>
        <dbReference type="ChEBI" id="CHEBI:24875"/>
        <label>2</label>
    </ligand>
</feature>
<feature type="binding site" evidence="1">
    <location>
        <position position="227"/>
    </location>
    <ligand>
        <name>Fe cation</name>
        <dbReference type="ChEBI" id="CHEBI:24875"/>
        <label>2</label>
    </ligand>
</feature>
<feature type="binding site" evidence="1">
    <location>
        <begin position="260"/>
        <end position="264"/>
    </location>
    <ligand>
        <name>FMN</name>
        <dbReference type="ChEBI" id="CHEBI:58210"/>
    </ligand>
</feature>
<feature type="binding site" evidence="1">
    <location>
        <begin position="342"/>
        <end position="369"/>
    </location>
    <ligand>
        <name>FMN</name>
        <dbReference type="ChEBI" id="CHEBI:58210"/>
    </ligand>
</feature>
<feature type="binding site" evidence="1">
    <location>
        <position position="428"/>
    </location>
    <ligand>
        <name>Fe cation</name>
        <dbReference type="ChEBI" id="CHEBI:24875"/>
        <label>3</label>
    </ligand>
</feature>
<feature type="binding site" evidence="1">
    <location>
        <position position="431"/>
    </location>
    <ligand>
        <name>Fe cation</name>
        <dbReference type="ChEBI" id="CHEBI:24875"/>
        <label>3</label>
    </ligand>
</feature>
<feature type="binding site" evidence="1">
    <location>
        <position position="461"/>
    </location>
    <ligand>
        <name>Fe cation</name>
        <dbReference type="ChEBI" id="CHEBI:24875"/>
        <label>3</label>
    </ligand>
</feature>
<feature type="binding site" evidence="1">
    <location>
        <position position="464"/>
    </location>
    <ligand>
        <name>Fe cation</name>
        <dbReference type="ChEBI" id="CHEBI:24875"/>
        <label>3</label>
    </ligand>
</feature>
<name>NORV_SHISS</name>
<comment type="function">
    <text evidence="1">Anaerobic nitric oxide reductase; uses NADH to detoxify nitric oxide (NO), protecting several 4Fe-4S NO-sensitive enzymes. Has at least 2 reductase partners, only one of which (NorW, flavorubredoxin reductase) has been identified. NO probably binds to the di-iron center; electrons enter from the NorW at rubredoxin and are transferred sequentially to the FMN center and the di-iron center. Also able to function as an aerobic oxygen reductase.</text>
</comment>
<comment type="cofactor">
    <cofactor evidence="1">
        <name>Fe cation</name>
        <dbReference type="ChEBI" id="CHEBI:24875"/>
    </cofactor>
    <text evidence="1">Binds 3 Fe cations per monomer.</text>
</comment>
<comment type="cofactor">
    <cofactor evidence="1">
        <name>FMN</name>
        <dbReference type="ChEBI" id="CHEBI:58210"/>
    </cofactor>
    <text evidence="1">Binds 1 FMN per monomer.</text>
</comment>
<comment type="pathway">
    <text evidence="1">Nitrogen metabolism; nitric oxide reduction.</text>
</comment>
<comment type="subunit">
    <text evidence="1">Homotetramer.</text>
</comment>
<comment type="subcellular location">
    <subcellularLocation>
        <location evidence="1">Cytoplasm</location>
    </subcellularLocation>
</comment>
<comment type="similarity">
    <text evidence="1">In the N-terminal section; belongs to the zinc metallo-hydrolase group 3 family.</text>
</comment>
<reference key="1">
    <citation type="journal article" date="2005" name="Nucleic Acids Res.">
        <title>Genome dynamics and diversity of Shigella species, the etiologic agents of bacillary dysentery.</title>
        <authorList>
            <person name="Yang F."/>
            <person name="Yang J."/>
            <person name="Zhang X."/>
            <person name="Chen L."/>
            <person name="Jiang Y."/>
            <person name="Yan Y."/>
            <person name="Tang X."/>
            <person name="Wang J."/>
            <person name="Xiong Z."/>
            <person name="Dong J."/>
            <person name="Xue Y."/>
            <person name="Zhu Y."/>
            <person name="Xu X."/>
            <person name="Sun L."/>
            <person name="Chen S."/>
            <person name="Nie H."/>
            <person name="Peng J."/>
            <person name="Xu J."/>
            <person name="Wang Y."/>
            <person name="Yuan Z."/>
            <person name="Wen Y."/>
            <person name="Yao Z."/>
            <person name="Shen Y."/>
            <person name="Qiang B."/>
            <person name="Hou Y."/>
            <person name="Yu J."/>
            <person name="Jin Q."/>
        </authorList>
    </citation>
    <scope>NUCLEOTIDE SEQUENCE [LARGE SCALE GENOMIC DNA]</scope>
    <source>
        <strain>Ss046</strain>
    </source>
</reference>
<organism>
    <name type="scientific">Shigella sonnei (strain Ss046)</name>
    <dbReference type="NCBI Taxonomy" id="300269"/>
    <lineage>
        <taxon>Bacteria</taxon>
        <taxon>Pseudomonadati</taxon>
        <taxon>Pseudomonadota</taxon>
        <taxon>Gammaproteobacteria</taxon>
        <taxon>Enterobacterales</taxon>
        <taxon>Enterobacteriaceae</taxon>
        <taxon>Shigella</taxon>
    </lineage>
</organism>
<accession>Q3YYF4</accession>
<proteinExistence type="inferred from homology"/>
<protein>
    <recommendedName>
        <fullName evidence="1">Anaerobic nitric oxide reductase flavorubredoxin</fullName>
        <shortName evidence="1">FlRd</shortName>
        <shortName evidence="1">FlavoRb</shortName>
    </recommendedName>
</protein>
<keyword id="KW-0963">Cytoplasm</keyword>
<keyword id="KW-0249">Electron transport</keyword>
<keyword id="KW-0285">Flavoprotein</keyword>
<keyword id="KW-0288">FMN</keyword>
<keyword id="KW-0408">Iron</keyword>
<keyword id="KW-0479">Metal-binding</keyword>
<keyword id="KW-0560">Oxidoreductase</keyword>
<keyword id="KW-1185">Reference proteome</keyword>
<keyword id="KW-0813">Transport</keyword>
<evidence type="ECO:0000255" key="1">
    <source>
        <dbReference type="HAMAP-Rule" id="MF_01312"/>
    </source>
</evidence>
<gene>
    <name evidence="1" type="primary">norV</name>
    <name evidence="1" type="synonym">flrD</name>
    <name type="ordered locus">SSON_2854</name>
</gene>